<gene>
    <name type="primary">Rpl18a</name>
</gene>
<protein>
    <recommendedName>
        <fullName evidence="3">Large ribosomal subunit protein eL20</fullName>
    </recommendedName>
    <alternativeName>
        <fullName>60S ribosomal protein L18a</fullName>
    </alternativeName>
</protein>
<accession>P62717</accession>
<accession>P11249</accession>
<accession>Q3TSN0</accession>
<name>RL18A_MOUSE</name>
<dbReference type="EMBL" id="AK010983">
    <property type="protein sequence ID" value="BAB27304.1"/>
    <property type="molecule type" value="mRNA"/>
</dbReference>
<dbReference type="EMBL" id="AK146543">
    <property type="protein sequence ID" value="BAE27248.1"/>
    <property type="molecule type" value="mRNA"/>
</dbReference>
<dbReference type="EMBL" id="AK161942">
    <property type="protein sequence ID" value="BAE36645.1"/>
    <property type="molecule type" value="mRNA"/>
</dbReference>
<dbReference type="EMBL" id="AK162047">
    <property type="protein sequence ID" value="BAE36696.1"/>
    <property type="molecule type" value="mRNA"/>
</dbReference>
<dbReference type="EMBL" id="BC037146">
    <property type="protein sequence ID" value="AAH37146.1"/>
    <property type="molecule type" value="mRNA"/>
</dbReference>
<dbReference type="CCDS" id="CCDS22386.1"/>
<dbReference type="RefSeq" id="NP_084027.1">
    <property type="nucleotide sequence ID" value="NM_029751.4"/>
</dbReference>
<dbReference type="PDB" id="6SWA">
    <property type="method" value="EM"/>
    <property type="resolution" value="3.10 A"/>
    <property type="chains" value="Q=1-176"/>
</dbReference>
<dbReference type="PDB" id="7CPU">
    <property type="method" value="EM"/>
    <property type="resolution" value="2.82 A"/>
    <property type="chains" value="LS=1-176"/>
</dbReference>
<dbReference type="PDB" id="7CPV">
    <property type="method" value="EM"/>
    <property type="resolution" value="3.03 A"/>
    <property type="chains" value="LS=1-176"/>
</dbReference>
<dbReference type="PDB" id="7LS1">
    <property type="method" value="EM"/>
    <property type="resolution" value="3.30 A"/>
    <property type="chains" value="M2=1-176"/>
</dbReference>
<dbReference type="PDB" id="7LS2">
    <property type="method" value="EM"/>
    <property type="resolution" value="3.10 A"/>
    <property type="chains" value="M2=1-176"/>
</dbReference>
<dbReference type="PDBsum" id="6SWA"/>
<dbReference type="PDBsum" id="7CPU"/>
<dbReference type="PDBsum" id="7CPV"/>
<dbReference type="PDBsum" id="7LS1"/>
<dbReference type="PDBsum" id="7LS2"/>
<dbReference type="EMDB" id="EMD-10321"/>
<dbReference type="EMDB" id="EMD-23500"/>
<dbReference type="EMDB" id="EMD-23501"/>
<dbReference type="EMDB" id="EMD-30432"/>
<dbReference type="EMDB" id="EMD-30433"/>
<dbReference type="SMR" id="P62717"/>
<dbReference type="BioGRID" id="218328">
    <property type="interactions" value="91"/>
</dbReference>
<dbReference type="ComplexPortal" id="CPX-5262">
    <property type="entry name" value="60S cytosolic large ribosomal subunit"/>
</dbReference>
<dbReference type="ComplexPortal" id="CPX-7662">
    <property type="entry name" value="60S cytosolic large ribosomal subunit, testis-specific variant"/>
</dbReference>
<dbReference type="ComplexPortal" id="CPX-7663">
    <property type="entry name" value="60S cytosolic large ribosomal subunit, striated muscle variant"/>
</dbReference>
<dbReference type="CORUM" id="P62717"/>
<dbReference type="FunCoup" id="P62717">
    <property type="interactions" value="2199"/>
</dbReference>
<dbReference type="IntAct" id="P62717">
    <property type="interactions" value="3"/>
</dbReference>
<dbReference type="MINT" id="P62717"/>
<dbReference type="STRING" id="10090.ENSMUSP00000058368"/>
<dbReference type="GlyGen" id="P62717">
    <property type="glycosylation" value="1 site, 1 O-linked glycan (1 site)"/>
</dbReference>
<dbReference type="iPTMnet" id="P62717"/>
<dbReference type="PhosphoSitePlus" id="P62717"/>
<dbReference type="SwissPalm" id="P62717"/>
<dbReference type="jPOST" id="P62717"/>
<dbReference type="PaxDb" id="10090-ENSMUSP00000058368"/>
<dbReference type="PeptideAtlas" id="P62717"/>
<dbReference type="ProteomicsDB" id="253328"/>
<dbReference type="Pumba" id="P62717"/>
<dbReference type="DNASU" id="76808"/>
<dbReference type="Ensembl" id="ENSMUST00000054220.10">
    <property type="protein sequence ID" value="ENSMUSP00000058368.9"/>
    <property type="gene ID" value="ENSMUSG00000045128.10"/>
</dbReference>
<dbReference type="GeneID" id="76808"/>
<dbReference type="KEGG" id="mmu:76808"/>
<dbReference type="UCSC" id="uc009mca.2">
    <property type="organism name" value="mouse"/>
</dbReference>
<dbReference type="AGR" id="MGI:1924058"/>
<dbReference type="CTD" id="6142"/>
<dbReference type="MGI" id="MGI:1924058">
    <property type="gene designation" value="Rpl18a"/>
</dbReference>
<dbReference type="VEuPathDB" id="HostDB:ENSMUSG00000045128"/>
<dbReference type="eggNOG" id="KOG0829">
    <property type="taxonomic scope" value="Eukaryota"/>
</dbReference>
<dbReference type="GeneTree" id="ENSGT00390000015797"/>
<dbReference type="HOGENOM" id="CLU_080773_2_0_1"/>
<dbReference type="InParanoid" id="P62717"/>
<dbReference type="OMA" id="CIFAKND"/>
<dbReference type="OrthoDB" id="1591at9989"/>
<dbReference type="PhylomeDB" id="P62717"/>
<dbReference type="TreeFam" id="TF300086"/>
<dbReference type="Reactome" id="R-MMU-156827">
    <property type="pathway name" value="L13a-mediated translational silencing of Ceruloplasmin expression"/>
</dbReference>
<dbReference type="Reactome" id="R-MMU-1799339">
    <property type="pathway name" value="SRP-dependent cotranslational protein targeting to membrane"/>
</dbReference>
<dbReference type="Reactome" id="R-MMU-6791226">
    <property type="pathway name" value="Major pathway of rRNA processing in the nucleolus and cytosol"/>
</dbReference>
<dbReference type="Reactome" id="R-MMU-72689">
    <property type="pathway name" value="Formation of a pool of free 40S subunits"/>
</dbReference>
<dbReference type="Reactome" id="R-MMU-72706">
    <property type="pathway name" value="GTP hydrolysis and joining of the 60S ribosomal subunit"/>
</dbReference>
<dbReference type="Reactome" id="R-MMU-975956">
    <property type="pathway name" value="Nonsense Mediated Decay (NMD) independent of the Exon Junction Complex (EJC)"/>
</dbReference>
<dbReference type="Reactome" id="R-MMU-975957">
    <property type="pathway name" value="Nonsense Mediated Decay (NMD) enhanced by the Exon Junction Complex (EJC)"/>
</dbReference>
<dbReference type="BioGRID-ORCS" id="76808">
    <property type="hits" value="26 hits in 76 CRISPR screens"/>
</dbReference>
<dbReference type="CD-CODE" id="CE726F99">
    <property type="entry name" value="Postsynaptic density"/>
</dbReference>
<dbReference type="ChiTaRS" id="Rpl18a">
    <property type="organism name" value="mouse"/>
</dbReference>
<dbReference type="PRO" id="PR:P62717"/>
<dbReference type="Proteomes" id="UP000000589">
    <property type="component" value="Chromosome 8"/>
</dbReference>
<dbReference type="RNAct" id="P62717">
    <property type="molecule type" value="protein"/>
</dbReference>
<dbReference type="Bgee" id="ENSMUSG00000045128">
    <property type="expression patterns" value="Expressed in yolk sac and 66 other cell types or tissues"/>
</dbReference>
<dbReference type="ExpressionAtlas" id="P62717">
    <property type="expression patterns" value="baseline and differential"/>
</dbReference>
<dbReference type="GO" id="GO:0005737">
    <property type="term" value="C:cytoplasm"/>
    <property type="evidence" value="ECO:0000314"/>
    <property type="project" value="ComplexPortal"/>
</dbReference>
<dbReference type="GO" id="GO:0005829">
    <property type="term" value="C:cytosol"/>
    <property type="evidence" value="ECO:0000304"/>
    <property type="project" value="Reactome"/>
</dbReference>
<dbReference type="GO" id="GO:0022625">
    <property type="term" value="C:cytosolic large ribosomal subunit"/>
    <property type="evidence" value="ECO:0000314"/>
    <property type="project" value="UniProtKB"/>
</dbReference>
<dbReference type="GO" id="GO:0014069">
    <property type="term" value="C:postsynaptic density"/>
    <property type="evidence" value="ECO:0000314"/>
    <property type="project" value="SynGO"/>
</dbReference>
<dbReference type="GO" id="GO:0003735">
    <property type="term" value="F:structural constituent of ribosome"/>
    <property type="evidence" value="ECO:0000314"/>
    <property type="project" value="UniProtKB"/>
</dbReference>
<dbReference type="GO" id="GO:0002181">
    <property type="term" value="P:cytoplasmic translation"/>
    <property type="evidence" value="ECO:0000303"/>
    <property type="project" value="ComplexPortal"/>
</dbReference>
<dbReference type="FunFam" id="3.10.20.10:FF:000001">
    <property type="entry name" value="60S ribosomal protein L18a"/>
    <property type="match status" value="1"/>
</dbReference>
<dbReference type="FunFam" id="3.10.20.10:FF:000002">
    <property type="entry name" value="60S ribosomal protein L18a"/>
    <property type="match status" value="1"/>
</dbReference>
<dbReference type="Gene3D" id="3.10.20.10">
    <property type="match status" value="2"/>
</dbReference>
<dbReference type="HAMAP" id="MF_00273">
    <property type="entry name" value="Ribosomal_eL20"/>
    <property type="match status" value="1"/>
</dbReference>
<dbReference type="InterPro" id="IPR028877">
    <property type="entry name" value="Ribosomal_eL20"/>
</dbReference>
<dbReference type="InterPro" id="IPR023573">
    <property type="entry name" value="Ribosomal_eL20_dom"/>
</dbReference>
<dbReference type="InterPro" id="IPR021138">
    <property type="entry name" value="Ribosomal_eL20_eukaryotes"/>
</dbReference>
<dbReference type="PANTHER" id="PTHR10052">
    <property type="entry name" value="60S RIBOSOMAL PROTEIN L18A"/>
    <property type="match status" value="1"/>
</dbReference>
<dbReference type="Pfam" id="PF01775">
    <property type="entry name" value="Ribosomal_L18A"/>
    <property type="match status" value="1"/>
</dbReference>
<dbReference type="PIRSF" id="PIRSF002190">
    <property type="entry name" value="Ribosomal_L18a"/>
    <property type="match status" value="1"/>
</dbReference>
<dbReference type="SUPFAM" id="SSF160374">
    <property type="entry name" value="RplX-like"/>
    <property type="match status" value="1"/>
</dbReference>
<sequence length="176" mass="20732">MKASGTLREYKVVGRCLPTPKCHTPPLYRMRIFAPNHVVAKSRFWYFVSQLKKMKKSSGEIVYCGQVFEKSPLRVKNFGIWLRYDSRSGTHNMYREYRDLTTAGAVTQCYRDMGARHRARAHSIQIMKVEEIAAGKCRRPAVKQFHDSKIKFPLPHRVLRRQHKPRFTTKRPNTFF</sequence>
<proteinExistence type="evidence at protein level"/>
<evidence type="ECO:0000250" key="1">
    <source>
        <dbReference type="UniProtKB" id="Q02543"/>
    </source>
</evidence>
<evidence type="ECO:0000269" key="2">
    <source>
    </source>
</evidence>
<evidence type="ECO:0000305" key="3"/>
<evidence type="ECO:0007744" key="4">
    <source>
        <dbReference type="PDB" id="7CPU"/>
    </source>
</evidence>
<evidence type="ECO:0007744" key="5">
    <source>
        <dbReference type="PDB" id="7CPV"/>
    </source>
</evidence>
<evidence type="ECO:0007744" key="6">
    <source>
    </source>
</evidence>
<evidence type="ECO:0007744" key="7">
    <source>
    </source>
</evidence>
<feature type="chain" id="PRO_0000213926" description="Large ribosomal subunit protein eL20">
    <location>
        <begin position="1"/>
        <end position="176"/>
    </location>
</feature>
<feature type="modified residue" description="Phosphotyrosine" evidence="1">
    <location>
        <position position="63"/>
    </location>
</feature>
<feature type="modified residue" description="Phosphoserine" evidence="6">
    <location>
        <position position="71"/>
    </location>
</feature>
<feature type="modified residue" description="N6-succinyllysine" evidence="7">
    <location>
        <position position="76"/>
    </location>
</feature>
<feature type="modified residue" description="Phosphoserine" evidence="6">
    <location>
        <position position="123"/>
    </location>
</feature>
<feature type="cross-link" description="Glycyl lysine isopeptide (Lys-Gly) (interchain with G-Cter in SUMO2)" evidence="1">
    <location>
        <position position="11"/>
    </location>
</feature>
<feature type="cross-link" description="Glycyl lysine isopeptide (Lys-Gly) (interchain with G-Cter in SUMO2)" evidence="1">
    <location>
        <position position="128"/>
    </location>
</feature>
<feature type="cross-link" description="Glycyl lysine isopeptide (Lys-Gly) (interchain with G-Cter in SUMO2)" evidence="1">
    <location>
        <position position="170"/>
    </location>
</feature>
<reference key="1">
    <citation type="journal article" date="2005" name="Science">
        <title>The transcriptional landscape of the mammalian genome.</title>
        <authorList>
            <person name="Carninci P."/>
            <person name="Kasukawa T."/>
            <person name="Katayama S."/>
            <person name="Gough J."/>
            <person name="Frith M.C."/>
            <person name="Maeda N."/>
            <person name="Oyama R."/>
            <person name="Ravasi T."/>
            <person name="Lenhard B."/>
            <person name="Wells C."/>
            <person name="Kodzius R."/>
            <person name="Shimokawa K."/>
            <person name="Bajic V.B."/>
            <person name="Brenner S.E."/>
            <person name="Batalov S."/>
            <person name="Forrest A.R."/>
            <person name="Zavolan M."/>
            <person name="Davis M.J."/>
            <person name="Wilming L.G."/>
            <person name="Aidinis V."/>
            <person name="Allen J.E."/>
            <person name="Ambesi-Impiombato A."/>
            <person name="Apweiler R."/>
            <person name="Aturaliya R.N."/>
            <person name="Bailey T.L."/>
            <person name="Bansal M."/>
            <person name="Baxter L."/>
            <person name="Beisel K.W."/>
            <person name="Bersano T."/>
            <person name="Bono H."/>
            <person name="Chalk A.M."/>
            <person name="Chiu K.P."/>
            <person name="Choudhary V."/>
            <person name="Christoffels A."/>
            <person name="Clutterbuck D.R."/>
            <person name="Crowe M.L."/>
            <person name="Dalla E."/>
            <person name="Dalrymple B.P."/>
            <person name="de Bono B."/>
            <person name="Della Gatta G."/>
            <person name="di Bernardo D."/>
            <person name="Down T."/>
            <person name="Engstrom P."/>
            <person name="Fagiolini M."/>
            <person name="Faulkner G."/>
            <person name="Fletcher C.F."/>
            <person name="Fukushima T."/>
            <person name="Furuno M."/>
            <person name="Futaki S."/>
            <person name="Gariboldi M."/>
            <person name="Georgii-Hemming P."/>
            <person name="Gingeras T.R."/>
            <person name="Gojobori T."/>
            <person name="Green R.E."/>
            <person name="Gustincich S."/>
            <person name="Harbers M."/>
            <person name="Hayashi Y."/>
            <person name="Hensch T.K."/>
            <person name="Hirokawa N."/>
            <person name="Hill D."/>
            <person name="Huminiecki L."/>
            <person name="Iacono M."/>
            <person name="Ikeo K."/>
            <person name="Iwama A."/>
            <person name="Ishikawa T."/>
            <person name="Jakt M."/>
            <person name="Kanapin A."/>
            <person name="Katoh M."/>
            <person name="Kawasawa Y."/>
            <person name="Kelso J."/>
            <person name="Kitamura H."/>
            <person name="Kitano H."/>
            <person name="Kollias G."/>
            <person name="Krishnan S.P."/>
            <person name="Kruger A."/>
            <person name="Kummerfeld S.K."/>
            <person name="Kurochkin I.V."/>
            <person name="Lareau L.F."/>
            <person name="Lazarevic D."/>
            <person name="Lipovich L."/>
            <person name="Liu J."/>
            <person name="Liuni S."/>
            <person name="McWilliam S."/>
            <person name="Madan Babu M."/>
            <person name="Madera M."/>
            <person name="Marchionni L."/>
            <person name="Matsuda H."/>
            <person name="Matsuzawa S."/>
            <person name="Miki H."/>
            <person name="Mignone F."/>
            <person name="Miyake S."/>
            <person name="Morris K."/>
            <person name="Mottagui-Tabar S."/>
            <person name="Mulder N."/>
            <person name="Nakano N."/>
            <person name="Nakauchi H."/>
            <person name="Ng P."/>
            <person name="Nilsson R."/>
            <person name="Nishiguchi S."/>
            <person name="Nishikawa S."/>
            <person name="Nori F."/>
            <person name="Ohara O."/>
            <person name="Okazaki Y."/>
            <person name="Orlando V."/>
            <person name="Pang K.C."/>
            <person name="Pavan W.J."/>
            <person name="Pavesi G."/>
            <person name="Pesole G."/>
            <person name="Petrovsky N."/>
            <person name="Piazza S."/>
            <person name="Reed J."/>
            <person name="Reid J.F."/>
            <person name="Ring B.Z."/>
            <person name="Ringwald M."/>
            <person name="Rost B."/>
            <person name="Ruan Y."/>
            <person name="Salzberg S.L."/>
            <person name="Sandelin A."/>
            <person name="Schneider C."/>
            <person name="Schoenbach C."/>
            <person name="Sekiguchi K."/>
            <person name="Semple C.A."/>
            <person name="Seno S."/>
            <person name="Sessa L."/>
            <person name="Sheng Y."/>
            <person name="Shibata Y."/>
            <person name="Shimada H."/>
            <person name="Shimada K."/>
            <person name="Silva D."/>
            <person name="Sinclair B."/>
            <person name="Sperling S."/>
            <person name="Stupka E."/>
            <person name="Sugiura K."/>
            <person name="Sultana R."/>
            <person name="Takenaka Y."/>
            <person name="Taki K."/>
            <person name="Tammoja K."/>
            <person name="Tan S.L."/>
            <person name="Tang S."/>
            <person name="Taylor M.S."/>
            <person name="Tegner J."/>
            <person name="Teichmann S.A."/>
            <person name="Ueda H.R."/>
            <person name="van Nimwegen E."/>
            <person name="Verardo R."/>
            <person name="Wei C.L."/>
            <person name="Yagi K."/>
            <person name="Yamanishi H."/>
            <person name="Zabarovsky E."/>
            <person name="Zhu S."/>
            <person name="Zimmer A."/>
            <person name="Hide W."/>
            <person name="Bult C."/>
            <person name="Grimmond S.M."/>
            <person name="Teasdale R.D."/>
            <person name="Liu E.T."/>
            <person name="Brusic V."/>
            <person name="Quackenbush J."/>
            <person name="Wahlestedt C."/>
            <person name="Mattick J.S."/>
            <person name="Hume D.A."/>
            <person name="Kai C."/>
            <person name="Sasaki D."/>
            <person name="Tomaru Y."/>
            <person name="Fukuda S."/>
            <person name="Kanamori-Katayama M."/>
            <person name="Suzuki M."/>
            <person name="Aoki J."/>
            <person name="Arakawa T."/>
            <person name="Iida J."/>
            <person name="Imamura K."/>
            <person name="Itoh M."/>
            <person name="Kato T."/>
            <person name="Kawaji H."/>
            <person name="Kawagashira N."/>
            <person name="Kawashima T."/>
            <person name="Kojima M."/>
            <person name="Kondo S."/>
            <person name="Konno H."/>
            <person name="Nakano K."/>
            <person name="Ninomiya N."/>
            <person name="Nishio T."/>
            <person name="Okada M."/>
            <person name="Plessy C."/>
            <person name="Shibata K."/>
            <person name="Shiraki T."/>
            <person name="Suzuki S."/>
            <person name="Tagami M."/>
            <person name="Waki K."/>
            <person name="Watahiki A."/>
            <person name="Okamura-Oho Y."/>
            <person name="Suzuki H."/>
            <person name="Kawai J."/>
            <person name="Hayashizaki Y."/>
        </authorList>
    </citation>
    <scope>NUCLEOTIDE SEQUENCE [LARGE SCALE MRNA]</scope>
    <source>
        <strain>C57BL/6J</strain>
        <tissue>Kidney</tissue>
        <tissue>Liver</tissue>
        <tissue>Muellerian duct</tissue>
        <tissue>Olfactory bulb</tissue>
    </source>
</reference>
<reference key="2">
    <citation type="journal article" date="2004" name="Genome Res.">
        <title>The status, quality, and expansion of the NIH full-length cDNA project: the Mammalian Gene Collection (MGC).</title>
        <authorList>
            <consortium name="The MGC Project Team"/>
        </authorList>
    </citation>
    <scope>NUCLEOTIDE SEQUENCE [LARGE SCALE MRNA]</scope>
    <source>
        <strain>FVB/N-3</strain>
        <tissue>Mammary gland</tissue>
    </source>
</reference>
<reference key="3">
    <citation type="journal article" date="2010" name="Cell">
        <title>A tissue-specific atlas of mouse protein phosphorylation and expression.</title>
        <authorList>
            <person name="Huttlin E.L."/>
            <person name="Jedrychowski M.P."/>
            <person name="Elias J.E."/>
            <person name="Goswami T."/>
            <person name="Rad R."/>
            <person name="Beausoleil S.A."/>
            <person name="Villen J."/>
            <person name="Haas W."/>
            <person name="Sowa M.E."/>
            <person name="Gygi S.P."/>
        </authorList>
    </citation>
    <scope>PHOSPHORYLATION [LARGE SCALE ANALYSIS] AT SER-71 AND SER-123</scope>
    <scope>IDENTIFICATION BY MASS SPECTROMETRY [LARGE SCALE ANALYSIS]</scope>
    <source>
        <tissue>Brain</tissue>
        <tissue>Brown adipose tissue</tissue>
        <tissue>Heart</tissue>
        <tissue>Kidney</tissue>
        <tissue>Liver</tissue>
        <tissue>Lung</tissue>
        <tissue>Pancreas</tissue>
        <tissue>Spleen</tissue>
        <tissue>Testis</tissue>
    </source>
</reference>
<reference key="4">
    <citation type="journal article" date="2013" name="Mol. Cell">
        <title>SIRT5-mediated lysine desuccinylation impacts diverse metabolic pathways.</title>
        <authorList>
            <person name="Park J."/>
            <person name="Chen Y."/>
            <person name="Tishkoff D.X."/>
            <person name="Peng C."/>
            <person name="Tan M."/>
            <person name="Dai L."/>
            <person name="Xie Z."/>
            <person name="Zhang Y."/>
            <person name="Zwaans B.M."/>
            <person name="Skinner M.E."/>
            <person name="Lombard D.B."/>
            <person name="Zhao Y."/>
        </authorList>
    </citation>
    <scope>SUCCINYLATION [LARGE SCALE ANALYSIS] AT LYS-76</scope>
    <scope>IDENTIFICATION BY MASS SPECTROMETRY [LARGE SCALE ANALYSIS]</scope>
    <source>
        <tissue>Embryonic fibroblast</tissue>
    </source>
</reference>
<reference evidence="4 5" key="5">
    <citation type="journal article" date="2022" name="Nature">
        <title>A male germ-cell-specific ribosome controls male fertility.</title>
        <authorList>
            <person name="Li H."/>
            <person name="Huo Y."/>
            <person name="He X."/>
            <person name="Yao L."/>
            <person name="Zhang H."/>
            <person name="Cui Y."/>
            <person name="Xiao H."/>
            <person name="Xie W."/>
            <person name="Zhang D."/>
            <person name="Wang Y."/>
            <person name="Zhang S."/>
            <person name="Tu H."/>
            <person name="Cheng Y."/>
            <person name="Guo Y."/>
            <person name="Cao X."/>
            <person name="Zhu Y."/>
            <person name="Jiang T."/>
            <person name="Guo X."/>
            <person name="Qin Y."/>
            <person name="Sha J."/>
        </authorList>
    </citation>
    <scope>STRUCTURE BY ELECTRON MICROSCOPY (3.03 ANGSTROMS) OF RIBOSOME</scope>
    <scope>FUNCTION</scope>
    <scope>SUBUNIT</scope>
    <scope>SUBCELLULAR LOCATION</scope>
</reference>
<comment type="function">
    <text evidence="2">Component of the large ribosomal subunit (PubMed:36517592). The ribosome is a large ribonucleoprotein complex responsible for the synthesis of proteins in the cell (PubMed:36517592).</text>
</comment>
<comment type="subunit">
    <text evidence="1 2">Component of the large ribosomal subunit (PubMed:36517592). Binds IPO9 with high affinity (By similarity).</text>
</comment>
<comment type="subcellular location">
    <subcellularLocation>
        <location evidence="2">Cytoplasm</location>
    </subcellularLocation>
</comment>
<comment type="similarity">
    <text evidence="3">Belongs to the eukaryotic ribosomal protein eL20 family.</text>
</comment>
<organism>
    <name type="scientific">Mus musculus</name>
    <name type="common">Mouse</name>
    <dbReference type="NCBI Taxonomy" id="10090"/>
    <lineage>
        <taxon>Eukaryota</taxon>
        <taxon>Metazoa</taxon>
        <taxon>Chordata</taxon>
        <taxon>Craniata</taxon>
        <taxon>Vertebrata</taxon>
        <taxon>Euteleostomi</taxon>
        <taxon>Mammalia</taxon>
        <taxon>Eutheria</taxon>
        <taxon>Euarchontoglires</taxon>
        <taxon>Glires</taxon>
        <taxon>Rodentia</taxon>
        <taxon>Myomorpha</taxon>
        <taxon>Muroidea</taxon>
        <taxon>Muridae</taxon>
        <taxon>Murinae</taxon>
        <taxon>Mus</taxon>
        <taxon>Mus</taxon>
    </lineage>
</organism>
<keyword id="KW-0002">3D-structure</keyword>
<keyword id="KW-0963">Cytoplasm</keyword>
<keyword id="KW-1017">Isopeptide bond</keyword>
<keyword id="KW-0597">Phosphoprotein</keyword>
<keyword id="KW-1185">Reference proteome</keyword>
<keyword id="KW-0687">Ribonucleoprotein</keyword>
<keyword id="KW-0689">Ribosomal protein</keyword>
<keyword id="KW-0832">Ubl conjugation</keyword>